<feature type="chain" id="PRO_0000416213" description="7-carboxy-7-deazaguanine synthase">
    <location>
        <begin position="1"/>
        <end position="234"/>
    </location>
</feature>
<feature type="domain" description="Radical SAM core" evidence="2">
    <location>
        <begin position="42"/>
        <end position="234"/>
    </location>
</feature>
<feature type="binding site" evidence="1">
    <location>
        <begin position="36"/>
        <end position="38"/>
    </location>
    <ligand>
        <name>substrate</name>
    </ligand>
</feature>
<feature type="binding site" evidence="1">
    <location>
        <position position="51"/>
    </location>
    <ligand>
        <name>substrate</name>
    </ligand>
</feature>
<feature type="binding site" evidence="1">
    <location>
        <position position="55"/>
    </location>
    <ligand>
        <name>[4Fe-4S] cluster</name>
        <dbReference type="ChEBI" id="CHEBI:49883"/>
        <note>4Fe-4S-S-AdoMet</note>
    </ligand>
</feature>
<feature type="binding site" evidence="1">
    <location>
        <position position="59"/>
    </location>
    <ligand>
        <name>[4Fe-4S] cluster</name>
        <dbReference type="ChEBI" id="CHEBI:49883"/>
        <note>4Fe-4S-S-AdoMet</note>
    </ligand>
</feature>
<feature type="binding site" evidence="1">
    <location>
        <position position="62"/>
    </location>
    <ligand>
        <name>[4Fe-4S] cluster</name>
        <dbReference type="ChEBI" id="CHEBI:49883"/>
        <note>4Fe-4S-S-AdoMet</note>
    </ligand>
</feature>
<feature type="binding site" evidence="1">
    <location>
        <position position="64"/>
    </location>
    <ligand>
        <name>Mg(2+)</name>
        <dbReference type="ChEBI" id="CHEBI:18420"/>
    </ligand>
</feature>
<feature type="binding site" evidence="1">
    <location>
        <position position="100"/>
    </location>
    <ligand>
        <name>substrate</name>
    </ligand>
</feature>
<feature type="binding site" evidence="1">
    <location>
        <position position="102"/>
    </location>
    <ligand>
        <name>S-adenosyl-L-methionine</name>
        <dbReference type="ChEBI" id="CHEBI:59789"/>
    </ligand>
</feature>
<feature type="binding site" evidence="1">
    <location>
        <begin position="144"/>
        <end position="146"/>
    </location>
    <ligand>
        <name>S-adenosyl-L-methionine</name>
        <dbReference type="ChEBI" id="CHEBI:59789"/>
    </ligand>
</feature>
<feature type="binding site" evidence="1">
    <location>
        <begin position="195"/>
        <end position="198"/>
    </location>
    <ligand>
        <name>S-adenosyl-L-methionine</name>
        <dbReference type="ChEBI" id="CHEBI:59789"/>
    </ligand>
</feature>
<protein>
    <recommendedName>
        <fullName evidence="1">7-carboxy-7-deazaguanine synthase</fullName>
        <shortName evidence="1">CDG synthase</shortName>
        <ecNumber evidence="1">4.3.99.3</ecNumber>
    </recommendedName>
    <alternativeName>
        <fullName evidence="1">Queuosine biosynthesis protein QueE</fullName>
    </alternativeName>
</protein>
<accession>Q9ZCV2</accession>
<sequence>MNQRINSYKMFGHNPKRSILSGDGTKLEVQSIFKTIQGEGIFVGYPSIFIRLGGCNLACNFCDTEFEDFKLIDIDQILNKVKNLSLNSKNAKTINLVVITGGEPMRQPIGLLCQKLLDQDFKVQIETNGTLYRSLPKEVFIVCSPKVGKTGYNKIREDLLPQISAVKFIISKNIVEYSIIPEVGQSAYDIPVFVQSMDQNDKRLNNENNELAVKLALESGARLSLQTHKFLGIE</sequence>
<evidence type="ECO:0000255" key="1">
    <source>
        <dbReference type="HAMAP-Rule" id="MF_00917"/>
    </source>
</evidence>
<evidence type="ECO:0000255" key="2">
    <source>
        <dbReference type="PROSITE-ProRule" id="PRU01266"/>
    </source>
</evidence>
<name>QUEE_RICPR</name>
<proteinExistence type="inferred from homology"/>
<organism>
    <name type="scientific">Rickettsia prowazekii (strain Madrid E)</name>
    <dbReference type="NCBI Taxonomy" id="272947"/>
    <lineage>
        <taxon>Bacteria</taxon>
        <taxon>Pseudomonadati</taxon>
        <taxon>Pseudomonadota</taxon>
        <taxon>Alphaproteobacteria</taxon>
        <taxon>Rickettsiales</taxon>
        <taxon>Rickettsiaceae</taxon>
        <taxon>Rickettsieae</taxon>
        <taxon>Rickettsia</taxon>
        <taxon>typhus group</taxon>
    </lineage>
</organism>
<keyword id="KW-0004">4Fe-4S</keyword>
<keyword id="KW-0408">Iron</keyword>
<keyword id="KW-0411">Iron-sulfur</keyword>
<keyword id="KW-0456">Lyase</keyword>
<keyword id="KW-0460">Magnesium</keyword>
<keyword id="KW-0479">Metal-binding</keyword>
<keyword id="KW-0671">Queuosine biosynthesis</keyword>
<keyword id="KW-1185">Reference proteome</keyword>
<keyword id="KW-0949">S-adenosyl-L-methionine</keyword>
<comment type="function">
    <text evidence="1">Catalyzes the complex heterocyclic radical-mediated conversion of 6-carboxy-5,6,7,8-tetrahydropterin (CPH4) to 7-carboxy-7-deazaguanine (CDG), a step common to the biosynthetic pathways of all 7-deazapurine-containing compounds.</text>
</comment>
<comment type="catalytic activity">
    <reaction evidence="1">
        <text>6-carboxy-5,6,7,8-tetrahydropterin + H(+) = 7-carboxy-7-deazaguanine + NH4(+)</text>
        <dbReference type="Rhea" id="RHEA:27974"/>
        <dbReference type="ChEBI" id="CHEBI:15378"/>
        <dbReference type="ChEBI" id="CHEBI:28938"/>
        <dbReference type="ChEBI" id="CHEBI:61032"/>
        <dbReference type="ChEBI" id="CHEBI:61036"/>
        <dbReference type="EC" id="4.3.99.3"/>
    </reaction>
</comment>
<comment type="cofactor">
    <cofactor evidence="1">
        <name>[4Fe-4S] cluster</name>
        <dbReference type="ChEBI" id="CHEBI:49883"/>
    </cofactor>
    <text evidence="1">Binds 1 [4Fe-4S] cluster. The cluster is coordinated with 3 cysteines and an exchangeable S-adenosyl-L-methionine.</text>
</comment>
<comment type="cofactor">
    <cofactor evidence="1">
        <name>S-adenosyl-L-methionine</name>
        <dbReference type="ChEBI" id="CHEBI:59789"/>
    </cofactor>
    <text evidence="1">Binds 1 S-adenosyl-L-methionine per subunit.</text>
</comment>
<comment type="cofactor">
    <cofactor evidence="1">
        <name>Mg(2+)</name>
        <dbReference type="ChEBI" id="CHEBI:18420"/>
    </cofactor>
</comment>
<comment type="pathway">
    <text evidence="1">Purine metabolism; 7-cyano-7-deazaguanine biosynthesis.</text>
</comment>
<comment type="subunit">
    <text evidence="1">Homodimer.</text>
</comment>
<comment type="similarity">
    <text evidence="1">Belongs to the radical SAM superfamily. 7-carboxy-7-deazaguanine synthase family.</text>
</comment>
<gene>
    <name evidence="1" type="primary">queE</name>
    <name type="ordered locus">RP607</name>
</gene>
<dbReference type="EC" id="4.3.99.3" evidence="1"/>
<dbReference type="EMBL" id="AJ235272">
    <property type="protein sequence ID" value="CAA15051.1"/>
    <property type="molecule type" value="Genomic_DNA"/>
</dbReference>
<dbReference type="PIR" id="A71666">
    <property type="entry name" value="A71666"/>
</dbReference>
<dbReference type="RefSeq" id="NP_220975.1">
    <property type="nucleotide sequence ID" value="NC_000963.1"/>
</dbReference>
<dbReference type="SMR" id="Q9ZCV2"/>
<dbReference type="STRING" id="272947.gene:17555686"/>
<dbReference type="EnsemblBacteria" id="CAA15051">
    <property type="protein sequence ID" value="CAA15051"/>
    <property type="gene ID" value="CAA15051"/>
</dbReference>
<dbReference type="KEGG" id="rpr:RP607"/>
<dbReference type="PATRIC" id="fig|272947.5.peg.626"/>
<dbReference type="eggNOG" id="COG0602">
    <property type="taxonomic scope" value="Bacteria"/>
</dbReference>
<dbReference type="HOGENOM" id="CLU_066739_2_3_5"/>
<dbReference type="OrthoDB" id="9792276at2"/>
<dbReference type="UniPathway" id="UPA00391"/>
<dbReference type="Proteomes" id="UP000002480">
    <property type="component" value="Chromosome"/>
</dbReference>
<dbReference type="GO" id="GO:0051539">
    <property type="term" value="F:4 iron, 4 sulfur cluster binding"/>
    <property type="evidence" value="ECO:0007669"/>
    <property type="project" value="UniProtKB-UniRule"/>
</dbReference>
<dbReference type="GO" id="GO:0016840">
    <property type="term" value="F:carbon-nitrogen lyase activity"/>
    <property type="evidence" value="ECO:0007669"/>
    <property type="project" value="UniProtKB-UniRule"/>
</dbReference>
<dbReference type="GO" id="GO:0000287">
    <property type="term" value="F:magnesium ion binding"/>
    <property type="evidence" value="ECO:0007669"/>
    <property type="project" value="UniProtKB-UniRule"/>
</dbReference>
<dbReference type="GO" id="GO:1904047">
    <property type="term" value="F:S-adenosyl-L-methionine binding"/>
    <property type="evidence" value="ECO:0007669"/>
    <property type="project" value="UniProtKB-UniRule"/>
</dbReference>
<dbReference type="GO" id="GO:0008616">
    <property type="term" value="P:queuosine biosynthetic process"/>
    <property type="evidence" value="ECO:0007669"/>
    <property type="project" value="UniProtKB-UniRule"/>
</dbReference>
<dbReference type="Gene3D" id="3.20.20.70">
    <property type="entry name" value="Aldolase class I"/>
    <property type="match status" value="1"/>
</dbReference>
<dbReference type="HAMAP" id="MF_00917">
    <property type="entry name" value="QueE"/>
    <property type="match status" value="1"/>
</dbReference>
<dbReference type="InterPro" id="IPR024924">
    <property type="entry name" value="7-CO-7-deazaguanine_synth-like"/>
</dbReference>
<dbReference type="InterPro" id="IPR013785">
    <property type="entry name" value="Aldolase_TIM"/>
</dbReference>
<dbReference type="InterPro" id="IPR007197">
    <property type="entry name" value="rSAM"/>
</dbReference>
<dbReference type="PANTHER" id="PTHR42836">
    <property type="entry name" value="7-CARBOXY-7-DEAZAGUANINE SYNTHASE"/>
    <property type="match status" value="1"/>
</dbReference>
<dbReference type="PANTHER" id="PTHR42836:SF1">
    <property type="entry name" value="7-CARBOXY-7-DEAZAGUANINE SYNTHASE"/>
    <property type="match status" value="1"/>
</dbReference>
<dbReference type="Pfam" id="PF04055">
    <property type="entry name" value="Radical_SAM"/>
    <property type="match status" value="1"/>
</dbReference>
<dbReference type="PIRSF" id="PIRSF000370">
    <property type="entry name" value="QueE"/>
    <property type="match status" value="1"/>
</dbReference>
<dbReference type="SFLD" id="SFLDS00029">
    <property type="entry name" value="Radical_SAM"/>
    <property type="match status" value="1"/>
</dbReference>
<dbReference type="SUPFAM" id="SSF102114">
    <property type="entry name" value="Radical SAM enzymes"/>
    <property type="match status" value="1"/>
</dbReference>
<dbReference type="PROSITE" id="PS51918">
    <property type="entry name" value="RADICAL_SAM"/>
    <property type="match status" value="1"/>
</dbReference>
<reference key="1">
    <citation type="journal article" date="1998" name="Nature">
        <title>The genome sequence of Rickettsia prowazekii and the origin of mitochondria.</title>
        <authorList>
            <person name="Andersson S.G.E."/>
            <person name="Zomorodipour A."/>
            <person name="Andersson J.O."/>
            <person name="Sicheritz-Ponten T."/>
            <person name="Alsmark U.C.M."/>
            <person name="Podowski R.M."/>
            <person name="Naeslund A.K."/>
            <person name="Eriksson A.-S."/>
            <person name="Winkler H.H."/>
            <person name="Kurland C.G."/>
        </authorList>
    </citation>
    <scope>NUCLEOTIDE SEQUENCE [LARGE SCALE GENOMIC DNA]</scope>
    <source>
        <strain>Madrid E</strain>
    </source>
</reference>